<organism>
    <name type="scientific">Flavobacterium psychrophilum (strain ATCC 49511 / DSM 21280 / CIP 103535 / JIP02/86)</name>
    <dbReference type="NCBI Taxonomy" id="402612"/>
    <lineage>
        <taxon>Bacteria</taxon>
        <taxon>Pseudomonadati</taxon>
        <taxon>Bacteroidota</taxon>
        <taxon>Flavobacteriia</taxon>
        <taxon>Flavobacteriales</taxon>
        <taxon>Flavobacteriaceae</taxon>
        <taxon>Flavobacterium</taxon>
    </lineage>
</organism>
<accession>A6H162</accession>
<gene>
    <name evidence="1" type="primary">prmC</name>
    <name type="synonym">hemK</name>
    <name type="ordered locus">FP2023</name>
</gene>
<protein>
    <recommendedName>
        <fullName evidence="1">Release factor glutamine methyltransferase</fullName>
        <shortName evidence="1">RF MTase</shortName>
        <ecNumber evidence="1">2.1.1.297</ecNumber>
    </recommendedName>
    <alternativeName>
        <fullName evidence="1">N5-glutamine methyltransferase PrmC</fullName>
    </alternativeName>
    <alternativeName>
        <fullName evidence="1">Protein-(glutamine-N5) MTase PrmC</fullName>
    </alternativeName>
    <alternativeName>
        <fullName evidence="1">Protein-glutamine N-methyltransferase PrmC</fullName>
    </alternativeName>
</protein>
<name>PRMC_FLAPJ</name>
<proteinExistence type="inferred from homology"/>
<reference key="1">
    <citation type="journal article" date="2007" name="Nat. Biotechnol.">
        <title>Complete genome sequence of the fish pathogen Flavobacterium psychrophilum.</title>
        <authorList>
            <person name="Duchaud E."/>
            <person name="Boussaha M."/>
            <person name="Loux V."/>
            <person name="Bernardet J.-F."/>
            <person name="Michel C."/>
            <person name="Kerouault B."/>
            <person name="Mondot S."/>
            <person name="Nicolas P."/>
            <person name="Bossy R."/>
            <person name="Caron C."/>
            <person name="Bessieres P."/>
            <person name="Gibrat J.-F."/>
            <person name="Claverol S."/>
            <person name="Dumetz F."/>
            <person name="Le Henaff M."/>
            <person name="Benmansour A."/>
        </authorList>
    </citation>
    <scope>NUCLEOTIDE SEQUENCE [LARGE SCALE GENOMIC DNA]</scope>
    <source>
        <strain>ATCC 49511 / DSM 21280 / CIP 103535 / JIP02/86</strain>
    </source>
</reference>
<keyword id="KW-0489">Methyltransferase</keyword>
<keyword id="KW-1185">Reference proteome</keyword>
<keyword id="KW-0949">S-adenosyl-L-methionine</keyword>
<keyword id="KW-0808">Transferase</keyword>
<dbReference type="EC" id="2.1.1.297" evidence="1"/>
<dbReference type="EMBL" id="AM398681">
    <property type="protein sequence ID" value="CAL44086.1"/>
    <property type="molecule type" value="Genomic_DNA"/>
</dbReference>
<dbReference type="RefSeq" id="WP_011964123.1">
    <property type="nucleotide sequence ID" value="NC_009613.3"/>
</dbReference>
<dbReference type="RefSeq" id="YP_001296888.1">
    <property type="nucleotide sequence ID" value="NC_009613.3"/>
</dbReference>
<dbReference type="SMR" id="A6H162"/>
<dbReference type="STRING" id="402612.FP2023"/>
<dbReference type="EnsemblBacteria" id="CAL44086">
    <property type="protein sequence ID" value="CAL44086"/>
    <property type="gene ID" value="FP2023"/>
</dbReference>
<dbReference type="GeneID" id="66551794"/>
<dbReference type="KEGG" id="fps:FP2023"/>
<dbReference type="PATRIC" id="fig|402612.5.peg.2048"/>
<dbReference type="eggNOG" id="COG2890">
    <property type="taxonomic scope" value="Bacteria"/>
</dbReference>
<dbReference type="HOGENOM" id="CLU_018398_3_2_10"/>
<dbReference type="OrthoDB" id="9800643at2"/>
<dbReference type="Proteomes" id="UP000006394">
    <property type="component" value="Chromosome"/>
</dbReference>
<dbReference type="GO" id="GO:0003676">
    <property type="term" value="F:nucleic acid binding"/>
    <property type="evidence" value="ECO:0007669"/>
    <property type="project" value="InterPro"/>
</dbReference>
<dbReference type="GO" id="GO:0102559">
    <property type="term" value="F:protein-(glutamine-N5) methyltransferase activity"/>
    <property type="evidence" value="ECO:0007669"/>
    <property type="project" value="UniProtKB-EC"/>
</dbReference>
<dbReference type="GO" id="GO:0036009">
    <property type="term" value="F:protein-glutamine N-methyltransferase activity"/>
    <property type="evidence" value="ECO:0007669"/>
    <property type="project" value="UniProtKB-UniRule"/>
</dbReference>
<dbReference type="GO" id="GO:0032259">
    <property type="term" value="P:methylation"/>
    <property type="evidence" value="ECO:0007669"/>
    <property type="project" value="UniProtKB-KW"/>
</dbReference>
<dbReference type="CDD" id="cd02440">
    <property type="entry name" value="AdoMet_MTases"/>
    <property type="match status" value="1"/>
</dbReference>
<dbReference type="Gene3D" id="1.10.8.10">
    <property type="entry name" value="DNA helicase RuvA subunit, C-terminal domain"/>
    <property type="match status" value="1"/>
</dbReference>
<dbReference type="Gene3D" id="3.40.50.150">
    <property type="entry name" value="Vaccinia Virus protein VP39"/>
    <property type="match status" value="1"/>
</dbReference>
<dbReference type="HAMAP" id="MF_02126">
    <property type="entry name" value="RF_methyltr_PrmC"/>
    <property type="match status" value="1"/>
</dbReference>
<dbReference type="InterPro" id="IPR002052">
    <property type="entry name" value="DNA_methylase_N6_adenine_CS"/>
</dbReference>
<dbReference type="InterPro" id="IPR004556">
    <property type="entry name" value="HemK-like"/>
</dbReference>
<dbReference type="InterPro" id="IPR050320">
    <property type="entry name" value="N5-glutamine_MTase"/>
</dbReference>
<dbReference type="InterPro" id="IPR040758">
    <property type="entry name" value="PrmC_N"/>
</dbReference>
<dbReference type="InterPro" id="IPR019874">
    <property type="entry name" value="RF_methyltr_PrmC"/>
</dbReference>
<dbReference type="InterPro" id="IPR029063">
    <property type="entry name" value="SAM-dependent_MTases_sf"/>
</dbReference>
<dbReference type="InterPro" id="IPR007848">
    <property type="entry name" value="Small_mtfrase_dom"/>
</dbReference>
<dbReference type="NCBIfam" id="TIGR00536">
    <property type="entry name" value="hemK_fam"/>
    <property type="match status" value="1"/>
</dbReference>
<dbReference type="NCBIfam" id="TIGR03534">
    <property type="entry name" value="RF_mod_PrmC"/>
    <property type="match status" value="1"/>
</dbReference>
<dbReference type="PANTHER" id="PTHR18895">
    <property type="entry name" value="HEMK METHYLTRANSFERASE"/>
    <property type="match status" value="1"/>
</dbReference>
<dbReference type="PANTHER" id="PTHR18895:SF74">
    <property type="entry name" value="MTRF1L RELEASE FACTOR GLUTAMINE METHYLTRANSFERASE"/>
    <property type="match status" value="1"/>
</dbReference>
<dbReference type="Pfam" id="PF05175">
    <property type="entry name" value="MTS"/>
    <property type="match status" value="1"/>
</dbReference>
<dbReference type="Pfam" id="PF17827">
    <property type="entry name" value="PrmC_N"/>
    <property type="match status" value="1"/>
</dbReference>
<dbReference type="SUPFAM" id="SSF53335">
    <property type="entry name" value="S-adenosyl-L-methionine-dependent methyltransferases"/>
    <property type="match status" value="1"/>
</dbReference>
<evidence type="ECO:0000255" key="1">
    <source>
        <dbReference type="HAMAP-Rule" id="MF_02126"/>
    </source>
</evidence>
<comment type="function">
    <text evidence="1">Methylates the class 1 translation termination release factors RF1/PrfA and RF2/PrfB on the glutamine residue of the universally conserved GGQ motif.</text>
</comment>
<comment type="catalytic activity">
    <reaction evidence="1">
        <text>L-glutaminyl-[peptide chain release factor] + S-adenosyl-L-methionine = N(5)-methyl-L-glutaminyl-[peptide chain release factor] + S-adenosyl-L-homocysteine + H(+)</text>
        <dbReference type="Rhea" id="RHEA:42896"/>
        <dbReference type="Rhea" id="RHEA-COMP:10271"/>
        <dbReference type="Rhea" id="RHEA-COMP:10272"/>
        <dbReference type="ChEBI" id="CHEBI:15378"/>
        <dbReference type="ChEBI" id="CHEBI:30011"/>
        <dbReference type="ChEBI" id="CHEBI:57856"/>
        <dbReference type="ChEBI" id="CHEBI:59789"/>
        <dbReference type="ChEBI" id="CHEBI:61891"/>
        <dbReference type="EC" id="2.1.1.297"/>
    </reaction>
</comment>
<comment type="similarity">
    <text evidence="1">Belongs to the protein N5-glutamine methyltransferase family. PrmC subfamily.</text>
</comment>
<feature type="chain" id="PRO_0000414521" description="Release factor glutamine methyltransferase">
    <location>
        <begin position="1"/>
        <end position="285"/>
    </location>
</feature>
<feature type="binding site" evidence="1">
    <location>
        <begin position="124"/>
        <end position="128"/>
    </location>
    <ligand>
        <name>S-adenosyl-L-methionine</name>
        <dbReference type="ChEBI" id="CHEBI:59789"/>
    </ligand>
</feature>
<feature type="binding site" evidence="1">
    <location>
        <position position="147"/>
    </location>
    <ligand>
        <name>S-adenosyl-L-methionine</name>
        <dbReference type="ChEBI" id="CHEBI:59789"/>
    </ligand>
</feature>
<feature type="binding site" evidence="1">
    <location>
        <begin position="190"/>
        <end position="193"/>
    </location>
    <ligand>
        <name>substrate</name>
    </ligand>
</feature>
<feature type="binding site" evidence="1">
    <location>
        <position position="190"/>
    </location>
    <ligand>
        <name>S-adenosyl-L-methionine</name>
        <dbReference type="ChEBI" id="CHEBI:59789"/>
    </ligand>
</feature>
<sequence length="285" mass="33155">MLIKNYRTQFVQALASIFDEKEIESFFYIILEAFHQLKRVDLVLSPDLKLDNIQLLQWETVLLQLKEQKPIQYILGETQFFGLPFYVNENTLIPRPETEELVEWIIKENLKISSLKNLKILDIGTGSGCIAISLAKNLPNASVFAIDVSDKALATAQKNAVLNEVDITFIEKNILQTEDLNQEFDIIVSNPPYVRNLEKKEIHKNVLEYEPHLALFVEDNDSLLFYRKITELATRNLSNNGQLYFEINQYLGKETVELLEKYNFKNTTLKKDIYGNDRMIKVNFR</sequence>